<keyword id="KW-0349">Heme</keyword>
<keyword id="KW-0408">Iron</keyword>
<keyword id="KW-0479">Metal-binding</keyword>
<keyword id="KW-0503">Monooxygenase</keyword>
<keyword id="KW-0560">Oxidoreductase</keyword>
<keyword id="KW-1185">Reference proteome</keyword>
<comment type="function">
    <text evidence="2 3">Cytochrome P450 monooxygenase; part of the gene cluster that mediates the biosynthesis of acetylaranotin, a member of the epipolythiodioxopiperazine (ETP) class of toxins characterized by a disulfide-bridged cyclic dipeptide (PubMed:23586797). The first step of acetylaranotin biosynthesis is performed by the NRPS ataP which produces diketopiperazine cyclo-L-Phe-L-Phe via the condensation of 2 phenylalanines (L-Phe) (PubMed:23586797). The ataC domain of ataTC then catalyzes the formation of bishydroxylation of cyclo-L-Phe-L-Phe (PubMed:23586797). The glutathione S-transferase domain ataG in ataIMG further catalyzes the conjugation of two glutathiones to the bishydroxylated intermediate (PubMed:23586797). Next, the dipeptidase ataJ removes the Glu residues (PubMed:23586797). The following step is performed by the carbon sulfur lyase domain ataI of ataIMG which may convert the bis-cysteinyl adduct to yield an epidithiol intermediate (PubMed:23586797). The ataT domain from ataTC then catalyzes the oxidation of the free dithiols, followed by a cyclization step catalyzed by the cytochrome P450 ataF (PubMed:23586797). AtaF probably acts as an epoxidase to promote a dual epoxidation formation at C8 and C9 along with C8' and C9', followed by the spontaneous nucleophilic attack of the amide nitrogens N10 and N10' to yield an intermediate with the pyrrolidine partial structure (PubMed:23586797). The final steps of acetylaranotin biosynthesis involve the acetylation and ring rearrangement of an epitetrathiodiketopiperazine intermediate to produce acetylaranotin (PubMed:23586797). AtaH probably catalyzes the acetylation of epitetrathiodiketopiperazine to produce a diacetate and ataY is responsible for the formation of the dihydrooxepin moiety that converts the diacetate intermediate to acetylaranotin via acetylapoaranotin (PubMed:23586797). Both enzymes could function independently in the absence of the other (PubMed:23586797). The acetylaranotin bis-thiomethyltransferase ataS located outside of acetylaranotin gene cluster is the main thiomethyltransferase responsible for converting acetylaranotin and its related intermediates to their methylated forms (PubMed:30096370).</text>
</comment>
<comment type="cofactor">
    <cofactor evidence="1">
        <name>heme</name>
        <dbReference type="ChEBI" id="CHEBI:30413"/>
    </cofactor>
</comment>
<comment type="pathway">
    <text evidence="2">Mycotoxin biosynthesis.</text>
</comment>
<comment type="disruption phenotype">
    <text evidence="2 3">Impairs the production of acetylaranotin and accumulates chemically stable intermediates or shunt products such as haematocin B, haematocin, terrespirodione A and terrespirodione B (PubMed:23586797, PubMed:30096370). Also leads to the accumulation of deacetylhaematocin and demethyl-deacetylhaematocin when ataS and ataH are also deleted (PubMed:30096370).</text>
</comment>
<comment type="similarity">
    <text evidence="5">Belongs to the cytochrome P450 family.</text>
</comment>
<proteinExistence type="inferred from homology"/>
<gene>
    <name evidence="4" type="primary">ataY</name>
    <name type="ORF">ATEG_03468</name>
</gene>
<name>ATAY_ASPTN</name>
<dbReference type="EC" id="1.-.-.-" evidence="6"/>
<dbReference type="EMBL" id="CH476597">
    <property type="protein sequence ID" value="EAU36742.1"/>
    <property type="molecule type" value="Genomic_DNA"/>
</dbReference>
<dbReference type="RefSeq" id="XP_001212646.1">
    <property type="nucleotide sequence ID" value="XM_001212646.1"/>
</dbReference>
<dbReference type="SMR" id="Q0CS66"/>
<dbReference type="STRING" id="341663.Q0CS66"/>
<dbReference type="EnsemblFungi" id="EAU36742">
    <property type="protein sequence ID" value="EAU36742"/>
    <property type="gene ID" value="ATEG_03468"/>
</dbReference>
<dbReference type="GeneID" id="4318081"/>
<dbReference type="VEuPathDB" id="FungiDB:ATEG_03468"/>
<dbReference type="eggNOG" id="KOG0158">
    <property type="taxonomic scope" value="Eukaryota"/>
</dbReference>
<dbReference type="HOGENOM" id="CLU_1214522_0_0_1"/>
<dbReference type="OMA" id="ETYITIY"/>
<dbReference type="OrthoDB" id="1470350at2759"/>
<dbReference type="Proteomes" id="UP000007963">
    <property type="component" value="Unassembled WGS sequence"/>
</dbReference>
<dbReference type="GO" id="GO:0020037">
    <property type="term" value="F:heme binding"/>
    <property type="evidence" value="ECO:0007669"/>
    <property type="project" value="InterPro"/>
</dbReference>
<dbReference type="GO" id="GO:0005506">
    <property type="term" value="F:iron ion binding"/>
    <property type="evidence" value="ECO:0007669"/>
    <property type="project" value="InterPro"/>
</dbReference>
<dbReference type="GO" id="GO:0004497">
    <property type="term" value="F:monooxygenase activity"/>
    <property type="evidence" value="ECO:0007669"/>
    <property type="project" value="UniProtKB-KW"/>
</dbReference>
<dbReference type="GO" id="GO:0016705">
    <property type="term" value="F:oxidoreductase activity, acting on paired donors, with incorporation or reduction of molecular oxygen"/>
    <property type="evidence" value="ECO:0007669"/>
    <property type="project" value="InterPro"/>
</dbReference>
<dbReference type="Gene3D" id="1.10.630.10">
    <property type="entry name" value="Cytochrome P450"/>
    <property type="match status" value="1"/>
</dbReference>
<dbReference type="InterPro" id="IPR001128">
    <property type="entry name" value="Cyt_P450"/>
</dbReference>
<dbReference type="InterPro" id="IPR036396">
    <property type="entry name" value="Cyt_P450_sf"/>
</dbReference>
<dbReference type="InterPro" id="IPR050121">
    <property type="entry name" value="Cytochrome_P450_monoxygenase"/>
</dbReference>
<dbReference type="PANTHER" id="PTHR24305">
    <property type="entry name" value="CYTOCHROME P450"/>
    <property type="match status" value="1"/>
</dbReference>
<dbReference type="PANTHER" id="PTHR24305:SF237">
    <property type="entry name" value="CYTOCHROME P450 MONOOXYGENASE ATNE-RELATED"/>
    <property type="match status" value="1"/>
</dbReference>
<dbReference type="Pfam" id="PF00067">
    <property type="entry name" value="p450"/>
    <property type="match status" value="1"/>
</dbReference>
<dbReference type="SUPFAM" id="SSF48264">
    <property type="entry name" value="Cytochrome P450"/>
    <property type="match status" value="1"/>
</dbReference>
<evidence type="ECO:0000250" key="1">
    <source>
        <dbReference type="UniProtKB" id="P04798"/>
    </source>
</evidence>
<evidence type="ECO:0000269" key="2">
    <source>
    </source>
</evidence>
<evidence type="ECO:0000269" key="3">
    <source>
    </source>
</evidence>
<evidence type="ECO:0000303" key="4">
    <source>
    </source>
</evidence>
<evidence type="ECO:0000305" key="5"/>
<evidence type="ECO:0000305" key="6">
    <source>
    </source>
</evidence>
<protein>
    <recommendedName>
        <fullName evidence="4">Cytochrome P450 monooxygenase ataY</fullName>
        <ecNumber evidence="6">1.-.-.-</ecNumber>
    </recommendedName>
    <alternativeName>
        <fullName evidence="4">Acetylaranotin biosynthesis cluster protein Y</fullName>
    </alternativeName>
</protein>
<sequence length="228" mass="26176">MYGPGTKFEKAMFYTRGPKEKQLLVNLASTTDKAVHARKRRIISHALSEASIRSYEVTILDKIQLFCKQLSDASTFGGPYKNMSRWFSYLTYDIMGQLTFSQSYDMLTKDDHHFIQPLIDSYQHSQLGTEPKLDQWGLAPLLLLRIMAENKKFRRYVDDQVNHRIALEKAGQGPPDIFKLLLEHKDKETGESMGFKELSDEAVVLIIAGRRFFSPCVNGSKRFTLNSQ</sequence>
<feature type="chain" id="PRO_0000440658" description="Cytochrome P450 monooxygenase ataY">
    <location>
        <begin position="1"/>
        <end position="228"/>
    </location>
</feature>
<feature type="binding site" description="axial binding residue" evidence="5">
    <location>
        <position position="216"/>
    </location>
    <ligand>
        <name>heme</name>
        <dbReference type="ChEBI" id="CHEBI:30413"/>
    </ligand>
    <ligandPart>
        <name>Fe</name>
        <dbReference type="ChEBI" id="CHEBI:18248"/>
    </ligandPart>
</feature>
<organism>
    <name type="scientific">Aspergillus terreus (strain NIH 2624 / FGSC A1156)</name>
    <dbReference type="NCBI Taxonomy" id="341663"/>
    <lineage>
        <taxon>Eukaryota</taxon>
        <taxon>Fungi</taxon>
        <taxon>Dikarya</taxon>
        <taxon>Ascomycota</taxon>
        <taxon>Pezizomycotina</taxon>
        <taxon>Eurotiomycetes</taxon>
        <taxon>Eurotiomycetidae</taxon>
        <taxon>Eurotiales</taxon>
        <taxon>Aspergillaceae</taxon>
        <taxon>Aspergillus</taxon>
        <taxon>Aspergillus subgen. Circumdati</taxon>
    </lineage>
</organism>
<accession>Q0CS66</accession>
<reference key="1">
    <citation type="submission" date="2005-09" db="EMBL/GenBank/DDBJ databases">
        <title>Annotation of the Aspergillus terreus NIH2624 genome.</title>
        <authorList>
            <person name="Birren B.W."/>
            <person name="Lander E.S."/>
            <person name="Galagan J.E."/>
            <person name="Nusbaum C."/>
            <person name="Devon K."/>
            <person name="Henn M."/>
            <person name="Ma L.-J."/>
            <person name="Jaffe D.B."/>
            <person name="Butler J."/>
            <person name="Alvarez P."/>
            <person name="Gnerre S."/>
            <person name="Grabherr M."/>
            <person name="Kleber M."/>
            <person name="Mauceli E.W."/>
            <person name="Brockman W."/>
            <person name="Rounsley S."/>
            <person name="Young S.K."/>
            <person name="LaButti K."/>
            <person name="Pushparaj V."/>
            <person name="DeCaprio D."/>
            <person name="Crawford M."/>
            <person name="Koehrsen M."/>
            <person name="Engels R."/>
            <person name="Montgomery P."/>
            <person name="Pearson M."/>
            <person name="Howarth C."/>
            <person name="Larson L."/>
            <person name="Luoma S."/>
            <person name="White J."/>
            <person name="Alvarado L."/>
            <person name="Kodira C.D."/>
            <person name="Zeng Q."/>
            <person name="Oleary S."/>
            <person name="Yandava C."/>
            <person name="Denning D.W."/>
            <person name="Nierman W.C."/>
            <person name="Milne T."/>
            <person name="Madden K."/>
        </authorList>
    </citation>
    <scope>NUCLEOTIDE SEQUENCE [LARGE SCALE GENOMIC DNA]</scope>
    <source>
        <strain>NIH 2624 / FGSC A1156</strain>
    </source>
</reference>
<reference key="2">
    <citation type="journal article" date="2013" name="J. Am. Chem. Soc.">
        <title>Biosynthetic pathway for the epipolythiodioxopiperazine acetylaranotin in Aspergillus terreus revealed by genome-based deletion analysis.</title>
        <authorList>
            <person name="Guo C.J."/>
            <person name="Yeh H.H."/>
            <person name="Chiang Y.M."/>
            <person name="Sanchez J.F."/>
            <person name="Chang S.L."/>
            <person name="Bruno K.S."/>
            <person name="Wang C.C."/>
        </authorList>
    </citation>
    <scope>FUNCTION</scope>
    <scope>DISRUPTION PHENOTYPE</scope>
    <scope>PATHWAY</scope>
</reference>
<reference key="3">
    <citation type="journal article" date="2018" name="Fungal Genet. Biol.">
        <title>Genome-based deletion analysis in Aspergillus terreus reveals the acetylaranotin bis-thiomethyltransferase gene.</title>
        <authorList>
            <person name="Sun W.W."/>
            <person name="Romsdahl J."/>
            <person name="Guo C.J."/>
            <person name="Wang C.C.C."/>
        </authorList>
    </citation>
    <scope>FUNCTION</scope>
    <scope>DISRUPTION PHENOTYPE</scope>
</reference>